<dbReference type="EMBL" id="CH902618">
    <property type="protein sequence ID" value="EDV40104.1"/>
    <property type="molecule type" value="Genomic_DNA"/>
</dbReference>
<dbReference type="SMR" id="B3M9R3"/>
<dbReference type="FunCoup" id="B3M9R3">
    <property type="interactions" value="252"/>
</dbReference>
<dbReference type="STRING" id="7217.B3M9R3"/>
<dbReference type="EnsemblMetazoa" id="FBtr0115054">
    <property type="protein sequence ID" value="FBpp0113546"/>
    <property type="gene ID" value="FBgn0087395"/>
</dbReference>
<dbReference type="EnsemblMetazoa" id="XM_001957262.4">
    <property type="protein sequence ID" value="XP_001957298.1"/>
    <property type="gene ID" value="LOC6493224"/>
</dbReference>
<dbReference type="GeneID" id="6493224"/>
<dbReference type="KEGG" id="dan:6493224"/>
<dbReference type="CTD" id="10101"/>
<dbReference type="eggNOG" id="KOG3022">
    <property type="taxonomic scope" value="Eukaryota"/>
</dbReference>
<dbReference type="HOGENOM" id="CLU_024839_0_1_1"/>
<dbReference type="InParanoid" id="B3M9R3"/>
<dbReference type="OMA" id="WIPVFAD"/>
<dbReference type="OrthoDB" id="1741334at2759"/>
<dbReference type="PhylomeDB" id="B3M9R3"/>
<dbReference type="Proteomes" id="UP000007801">
    <property type="component" value="Unassembled WGS sequence"/>
</dbReference>
<dbReference type="GO" id="GO:0005829">
    <property type="term" value="C:cytosol"/>
    <property type="evidence" value="ECO:0007669"/>
    <property type="project" value="TreeGrafter"/>
</dbReference>
<dbReference type="GO" id="GO:0051539">
    <property type="term" value="F:4 iron, 4 sulfur cluster binding"/>
    <property type="evidence" value="ECO:0007669"/>
    <property type="project" value="UniProtKB-UniRule"/>
</dbReference>
<dbReference type="GO" id="GO:0005524">
    <property type="term" value="F:ATP binding"/>
    <property type="evidence" value="ECO:0007669"/>
    <property type="project" value="UniProtKB-KW"/>
</dbReference>
<dbReference type="GO" id="GO:0140663">
    <property type="term" value="F:ATP-dependent FeS chaperone activity"/>
    <property type="evidence" value="ECO:0007669"/>
    <property type="project" value="InterPro"/>
</dbReference>
<dbReference type="GO" id="GO:0046872">
    <property type="term" value="F:metal ion binding"/>
    <property type="evidence" value="ECO:0007669"/>
    <property type="project" value="UniProtKB-KW"/>
</dbReference>
<dbReference type="GO" id="GO:0016226">
    <property type="term" value="P:iron-sulfur cluster assembly"/>
    <property type="evidence" value="ECO:0007669"/>
    <property type="project" value="UniProtKB-UniRule"/>
</dbReference>
<dbReference type="CDD" id="cd02037">
    <property type="entry name" value="Mrp_NBP35"/>
    <property type="match status" value="1"/>
</dbReference>
<dbReference type="FunFam" id="3.40.50.300:FF:000796">
    <property type="entry name" value="Cytosolic Fe-S cluster assembly factor NUBP2"/>
    <property type="match status" value="1"/>
</dbReference>
<dbReference type="Gene3D" id="3.40.50.300">
    <property type="entry name" value="P-loop containing nucleotide triphosphate hydrolases"/>
    <property type="match status" value="1"/>
</dbReference>
<dbReference type="HAMAP" id="MF_02040">
    <property type="entry name" value="Mrp_NBP35"/>
    <property type="match status" value="1"/>
</dbReference>
<dbReference type="HAMAP" id="MF_03039">
    <property type="entry name" value="NUBP2"/>
    <property type="match status" value="1"/>
</dbReference>
<dbReference type="InterPro" id="IPR000808">
    <property type="entry name" value="Mrp-like_CS"/>
</dbReference>
<dbReference type="InterPro" id="IPR019591">
    <property type="entry name" value="Mrp/NBP35_ATP-bd"/>
</dbReference>
<dbReference type="InterPro" id="IPR028600">
    <property type="entry name" value="NUBP2/Cfd1_eukaryotes"/>
</dbReference>
<dbReference type="InterPro" id="IPR027417">
    <property type="entry name" value="P-loop_NTPase"/>
</dbReference>
<dbReference type="InterPro" id="IPR033756">
    <property type="entry name" value="YlxH/NBP35"/>
</dbReference>
<dbReference type="PANTHER" id="PTHR23264:SF19">
    <property type="entry name" value="CYTOSOLIC FE-S CLUSTER ASSEMBLY FACTOR NUBP2"/>
    <property type="match status" value="1"/>
</dbReference>
<dbReference type="PANTHER" id="PTHR23264">
    <property type="entry name" value="NUCLEOTIDE-BINDING PROTEIN NBP35 YEAST -RELATED"/>
    <property type="match status" value="1"/>
</dbReference>
<dbReference type="Pfam" id="PF10609">
    <property type="entry name" value="ParA"/>
    <property type="match status" value="1"/>
</dbReference>
<dbReference type="SUPFAM" id="SSF52540">
    <property type="entry name" value="P-loop containing nucleoside triphosphate hydrolases"/>
    <property type="match status" value="1"/>
</dbReference>
<dbReference type="PROSITE" id="PS01215">
    <property type="entry name" value="MRP"/>
    <property type="match status" value="1"/>
</dbReference>
<accession>B3M9R3</accession>
<evidence type="ECO:0000250" key="1">
    <source>
        <dbReference type="UniProtKB" id="Q9VPD2"/>
    </source>
</evidence>
<evidence type="ECO:0000255" key="2">
    <source>
        <dbReference type="HAMAP-Rule" id="MF_03039"/>
    </source>
</evidence>
<feature type="chain" id="PRO_0000382708" description="Cytosolic Fe-S cluster assembly factor Nubp2 homolog">
    <location>
        <begin position="1"/>
        <end position="261"/>
    </location>
</feature>
<feature type="binding site" evidence="2">
    <location>
        <begin position="14"/>
        <end position="21"/>
    </location>
    <ligand>
        <name>ATP</name>
        <dbReference type="ChEBI" id="CHEBI:30616"/>
    </ligand>
</feature>
<feature type="binding site" evidence="2">
    <location>
        <position position="188"/>
    </location>
    <ligand>
        <name>[4Fe-4S] cluster</name>
        <dbReference type="ChEBI" id="CHEBI:49883"/>
        <note>ligand shared between dimeric partners</note>
    </ligand>
</feature>
<feature type="binding site" evidence="2">
    <location>
        <position position="191"/>
    </location>
    <ligand>
        <name>[4Fe-4S] cluster</name>
        <dbReference type="ChEBI" id="CHEBI:49883"/>
        <note>ligand shared between dimeric partners</note>
    </ligand>
</feature>
<sequence length="261" mass="28165">MLDKVKNVIVVLSGKGGVGKSTVSTQLALALRQTGHKVGLLDIDLCGPSVPYLLGLEGSDIFQCDEGWVPIYTDESQTLAVMSIGFLLKNRTDPVIWRGPKKTMMIRQFLTDVKWDELDYLIIDTPPGTSDEHITVMECLREVPCNGAIIVTTPQGVALDDVRKEITFCKKTGIKLLGIVENMSGFVCPHCTSCTNIFSSNGGVELAKYAQIPHLGTLPIDPRVGVLAGTTASVLDELPDSTTAEVLRGLVQHLDSITLTA</sequence>
<gene>
    <name evidence="1" type="primary">Nubp2</name>
    <name type="ORF">GF10354</name>
</gene>
<name>NUBP2_DROAN</name>
<comment type="function">
    <text evidence="2">Component of the cytosolic iron-sulfur (Fe/S) protein assembly (CIA) machinery. Required for maturation of extramitochondrial Fe-S proteins. The Nubp1-Nubp2 heterotetramer forms a Fe-S scaffold complex, mediating the de novo assembly of an Fe-S cluster and its transfer to target apoproteins.</text>
</comment>
<comment type="cofactor">
    <cofactor evidence="2">
        <name>[4Fe-4S] cluster</name>
        <dbReference type="ChEBI" id="CHEBI:49883"/>
    </cofactor>
    <text evidence="2">Binds 4 [4Fe-4S] clusters per heterotetramer. Contains two stable clusters in the N-termini of Nubp1 and two labile, bridging clusters between subunits of the Nubp1-Nubp2 heterotetramer.</text>
</comment>
<comment type="subunit">
    <text evidence="2">Heterotetramer of 2 Nubp1 and 2 Nubp2 chains.</text>
</comment>
<comment type="subcellular location">
    <subcellularLocation>
        <location evidence="2">Cytoplasm</location>
    </subcellularLocation>
</comment>
<comment type="similarity">
    <text evidence="2">Belongs to the Mrp/NBP35 ATP-binding proteins family. NUBP2/CFD1 subfamily.</text>
</comment>
<reference key="1">
    <citation type="journal article" date="2007" name="Nature">
        <title>Evolution of genes and genomes on the Drosophila phylogeny.</title>
        <authorList>
            <consortium name="Drosophila 12 genomes consortium"/>
        </authorList>
    </citation>
    <scope>NUCLEOTIDE SEQUENCE [LARGE SCALE GENOMIC DNA]</scope>
    <source>
        <strain>Tucson 14024-0371.13</strain>
    </source>
</reference>
<proteinExistence type="inferred from homology"/>
<organism>
    <name type="scientific">Drosophila ananassae</name>
    <name type="common">Fruit fly</name>
    <dbReference type="NCBI Taxonomy" id="7217"/>
    <lineage>
        <taxon>Eukaryota</taxon>
        <taxon>Metazoa</taxon>
        <taxon>Ecdysozoa</taxon>
        <taxon>Arthropoda</taxon>
        <taxon>Hexapoda</taxon>
        <taxon>Insecta</taxon>
        <taxon>Pterygota</taxon>
        <taxon>Neoptera</taxon>
        <taxon>Endopterygota</taxon>
        <taxon>Diptera</taxon>
        <taxon>Brachycera</taxon>
        <taxon>Muscomorpha</taxon>
        <taxon>Ephydroidea</taxon>
        <taxon>Drosophilidae</taxon>
        <taxon>Drosophila</taxon>
        <taxon>Sophophora</taxon>
    </lineage>
</organism>
<protein>
    <recommendedName>
        <fullName evidence="2">Cytosolic Fe-S cluster assembly factor Nubp2 homolog</fullName>
    </recommendedName>
</protein>
<keyword id="KW-0004">4Fe-4S</keyword>
<keyword id="KW-0067">ATP-binding</keyword>
<keyword id="KW-0963">Cytoplasm</keyword>
<keyword id="KW-0408">Iron</keyword>
<keyword id="KW-0411">Iron-sulfur</keyword>
<keyword id="KW-0479">Metal-binding</keyword>
<keyword id="KW-0547">Nucleotide-binding</keyword>
<keyword id="KW-1185">Reference proteome</keyword>